<evidence type="ECO:0000255" key="1">
    <source>
        <dbReference type="HAMAP-Rule" id="MF_01551"/>
    </source>
</evidence>
<accession>B5FAT6</accession>
<keyword id="KW-0963">Cytoplasm</keyword>
<keyword id="KW-0489">Methyltransferase</keyword>
<keyword id="KW-0698">rRNA processing</keyword>
<keyword id="KW-0949">S-adenosyl-L-methionine</keyword>
<keyword id="KW-0808">Transferase</keyword>
<proteinExistence type="inferred from homology"/>
<protein>
    <recommendedName>
        <fullName evidence="1">Ribosomal RNA large subunit methyltransferase M</fullName>
        <ecNumber evidence="1">2.1.1.186</ecNumber>
    </recommendedName>
    <alternativeName>
        <fullName evidence="1">23S rRNA (cytidine2498-2'-O)-methyltransferase</fullName>
    </alternativeName>
    <alternativeName>
        <fullName evidence="1">23S rRNA 2'-O-ribose methyltransferase RlmM</fullName>
    </alternativeName>
</protein>
<reference key="1">
    <citation type="submission" date="2008-08" db="EMBL/GenBank/DDBJ databases">
        <title>Complete sequence of Vibrio fischeri strain MJ11.</title>
        <authorList>
            <person name="Mandel M.J."/>
            <person name="Stabb E.V."/>
            <person name="Ruby E.G."/>
            <person name="Ferriera S."/>
            <person name="Johnson J."/>
            <person name="Kravitz S."/>
            <person name="Beeson K."/>
            <person name="Sutton G."/>
            <person name="Rogers Y.-H."/>
            <person name="Friedman R."/>
            <person name="Frazier M."/>
            <person name="Venter J.C."/>
        </authorList>
    </citation>
    <scope>NUCLEOTIDE SEQUENCE [LARGE SCALE GENOMIC DNA]</scope>
    <source>
        <strain>MJ11</strain>
    </source>
</reference>
<dbReference type="EC" id="2.1.1.186" evidence="1"/>
<dbReference type="EMBL" id="CP001139">
    <property type="protein sequence ID" value="ACH66175.1"/>
    <property type="molecule type" value="Genomic_DNA"/>
</dbReference>
<dbReference type="SMR" id="B5FAT6"/>
<dbReference type="KEGG" id="vfm:VFMJ11_0607"/>
<dbReference type="HOGENOM" id="CLU_043780_0_0_6"/>
<dbReference type="Proteomes" id="UP000001857">
    <property type="component" value="Chromosome I"/>
</dbReference>
<dbReference type="GO" id="GO:0005737">
    <property type="term" value="C:cytoplasm"/>
    <property type="evidence" value="ECO:0007669"/>
    <property type="project" value="UniProtKB-SubCell"/>
</dbReference>
<dbReference type="GO" id="GO:0008757">
    <property type="term" value="F:S-adenosylmethionine-dependent methyltransferase activity"/>
    <property type="evidence" value="ECO:0007669"/>
    <property type="project" value="UniProtKB-UniRule"/>
</dbReference>
<dbReference type="GO" id="GO:0032259">
    <property type="term" value="P:methylation"/>
    <property type="evidence" value="ECO:0007669"/>
    <property type="project" value="UniProtKB-KW"/>
</dbReference>
<dbReference type="GO" id="GO:0006364">
    <property type="term" value="P:rRNA processing"/>
    <property type="evidence" value="ECO:0007669"/>
    <property type="project" value="UniProtKB-UniRule"/>
</dbReference>
<dbReference type="Gene3D" id="3.30.2300.20">
    <property type="match status" value="1"/>
</dbReference>
<dbReference type="Gene3D" id="3.30.70.2810">
    <property type="match status" value="1"/>
</dbReference>
<dbReference type="Gene3D" id="3.40.50.150">
    <property type="entry name" value="Vaccinia Virus protein VP39"/>
    <property type="match status" value="1"/>
</dbReference>
<dbReference type="HAMAP" id="MF_01551">
    <property type="entry name" value="23SrRNA_methyltr_M"/>
    <property type="match status" value="1"/>
</dbReference>
<dbReference type="InterPro" id="IPR040739">
    <property type="entry name" value="RlmM_FDX"/>
</dbReference>
<dbReference type="InterPro" id="IPR048646">
    <property type="entry name" value="RlmM_THUMP-like"/>
</dbReference>
<dbReference type="InterPro" id="IPR002877">
    <property type="entry name" value="RNA_MeTrfase_FtsJ_dom"/>
</dbReference>
<dbReference type="InterPro" id="IPR011224">
    <property type="entry name" value="rRNA_MeTrfase_M"/>
</dbReference>
<dbReference type="InterPro" id="IPR029063">
    <property type="entry name" value="SAM-dependent_MTases_sf"/>
</dbReference>
<dbReference type="NCBIfam" id="NF008734">
    <property type="entry name" value="PRK11760.1"/>
    <property type="match status" value="1"/>
</dbReference>
<dbReference type="PANTHER" id="PTHR37524">
    <property type="entry name" value="RIBOSOMAL RNA LARGE SUBUNIT METHYLTRANSFERASE M"/>
    <property type="match status" value="1"/>
</dbReference>
<dbReference type="PANTHER" id="PTHR37524:SF2">
    <property type="entry name" value="RIBOSOMAL RNA METHYLTRANSFERASE FTSJ DOMAIN-CONTAINING PROTEIN"/>
    <property type="match status" value="1"/>
</dbReference>
<dbReference type="Pfam" id="PF01728">
    <property type="entry name" value="FtsJ"/>
    <property type="match status" value="1"/>
</dbReference>
<dbReference type="Pfam" id="PF18125">
    <property type="entry name" value="RlmM_FDX"/>
    <property type="match status" value="1"/>
</dbReference>
<dbReference type="Pfam" id="PF21239">
    <property type="entry name" value="RLMM_N"/>
    <property type="match status" value="1"/>
</dbReference>
<dbReference type="PIRSF" id="PIRSF028774">
    <property type="entry name" value="UCP028774"/>
    <property type="match status" value="1"/>
</dbReference>
<dbReference type="SUPFAM" id="SSF53335">
    <property type="entry name" value="S-adenosyl-L-methionine-dependent methyltransferases"/>
    <property type="match status" value="1"/>
</dbReference>
<sequence length="359" mass="41399">MFYCRSGFEKECAGEIQDKATQLEVFGFPRLKNNTGYVLFECYQEGDADRLIREIKFNELIFARQMFAVAVEVSDLPKDDRISPILDALSEVEDVPCCGDIRIETPDTNEAKELLKFCRKFTVPMRQALRGKKMLTERDSNRIPVLHICFIAPGHCYVGYSYTNNNSQFFMGIPRLKFPADAPSRSTLKLEEAFHVFIPKEEWDDRLASGMWGVDLGACPGGWTYQLVKRSMFVHAIDNGMMAQSLMDTGQVKHHMVDGFKFEPPRKNVTWLICDMVEKPARVAHLMGEWLIKGWAKEALFNLKLPMKGRYDEVLQDIENLKDFLKKNGFQYKLQAKHLYHDREEITVHIQAISNISPH</sequence>
<gene>
    <name evidence="1" type="primary">rlmM</name>
    <name type="ordered locus">VFMJ11_0607</name>
</gene>
<feature type="chain" id="PRO_1000201535" description="Ribosomal RNA large subunit methyltransferase M">
    <location>
        <begin position="1"/>
        <end position="359"/>
    </location>
</feature>
<feature type="active site" description="Proton acceptor" evidence="1">
    <location>
        <position position="304"/>
    </location>
</feature>
<feature type="binding site" evidence="1">
    <location>
        <position position="186"/>
    </location>
    <ligand>
        <name>S-adenosyl-L-methionine</name>
        <dbReference type="ChEBI" id="CHEBI:59789"/>
    </ligand>
</feature>
<feature type="binding site" evidence="1">
    <location>
        <begin position="219"/>
        <end position="222"/>
    </location>
    <ligand>
        <name>S-adenosyl-L-methionine</name>
        <dbReference type="ChEBI" id="CHEBI:59789"/>
    </ligand>
</feature>
<feature type="binding site" evidence="1">
    <location>
        <position position="238"/>
    </location>
    <ligand>
        <name>S-adenosyl-L-methionine</name>
        <dbReference type="ChEBI" id="CHEBI:59789"/>
    </ligand>
</feature>
<feature type="binding site" evidence="1">
    <location>
        <position position="258"/>
    </location>
    <ligand>
        <name>S-adenosyl-L-methionine</name>
        <dbReference type="ChEBI" id="CHEBI:59789"/>
    </ligand>
</feature>
<feature type="binding site" evidence="1">
    <location>
        <position position="275"/>
    </location>
    <ligand>
        <name>S-adenosyl-L-methionine</name>
        <dbReference type="ChEBI" id="CHEBI:59789"/>
    </ligand>
</feature>
<comment type="function">
    <text evidence="1">Catalyzes the 2'-O-methylation at nucleotide C2498 in 23S rRNA.</text>
</comment>
<comment type="catalytic activity">
    <reaction evidence="1">
        <text>cytidine(2498) in 23S rRNA + S-adenosyl-L-methionine = 2'-O-methylcytidine(2498) in 23S rRNA + S-adenosyl-L-homocysteine + H(+)</text>
        <dbReference type="Rhea" id="RHEA:42788"/>
        <dbReference type="Rhea" id="RHEA-COMP:10244"/>
        <dbReference type="Rhea" id="RHEA-COMP:10245"/>
        <dbReference type="ChEBI" id="CHEBI:15378"/>
        <dbReference type="ChEBI" id="CHEBI:57856"/>
        <dbReference type="ChEBI" id="CHEBI:59789"/>
        <dbReference type="ChEBI" id="CHEBI:74495"/>
        <dbReference type="ChEBI" id="CHEBI:82748"/>
        <dbReference type="EC" id="2.1.1.186"/>
    </reaction>
</comment>
<comment type="subunit">
    <text evidence="1">Monomer.</text>
</comment>
<comment type="subcellular location">
    <subcellularLocation>
        <location evidence="1">Cytoplasm</location>
    </subcellularLocation>
</comment>
<comment type="similarity">
    <text evidence="1">Belongs to the class I-like SAM-binding methyltransferase superfamily. RNA methyltransferase RlmE family. RlmM subfamily.</text>
</comment>
<organism>
    <name type="scientific">Aliivibrio fischeri (strain MJ11)</name>
    <name type="common">Vibrio fischeri</name>
    <dbReference type="NCBI Taxonomy" id="388396"/>
    <lineage>
        <taxon>Bacteria</taxon>
        <taxon>Pseudomonadati</taxon>
        <taxon>Pseudomonadota</taxon>
        <taxon>Gammaproteobacteria</taxon>
        <taxon>Vibrionales</taxon>
        <taxon>Vibrionaceae</taxon>
        <taxon>Aliivibrio</taxon>
    </lineage>
</organism>
<name>RLMM_ALIFM</name>